<dbReference type="EMBL" id="AL022605">
    <property type="protein sequence ID" value="CAB77062.1"/>
    <property type="status" value="ALT_SEQ"/>
    <property type="molecule type" value="Genomic_DNA"/>
</dbReference>
<dbReference type="EMBL" id="AL161595">
    <property type="protein sequence ID" value="CAB80638.1"/>
    <property type="status" value="ALT_SEQ"/>
    <property type="molecule type" value="Genomic_DNA"/>
</dbReference>
<dbReference type="EMBL" id="CP002687">
    <property type="protein sequence ID" value="AEE87115.1"/>
    <property type="molecule type" value="Genomic_DNA"/>
</dbReference>
<dbReference type="PIR" id="H85470">
    <property type="entry name" value="H85470"/>
</dbReference>
<dbReference type="PIR" id="T05012">
    <property type="entry name" value="T05012"/>
</dbReference>
<dbReference type="RefSeq" id="NP_568071.1">
    <property type="nucleotide sequence ID" value="NM_120138.2"/>
</dbReference>
<dbReference type="SMR" id="P0C2F9"/>
<dbReference type="FunCoup" id="P0C2F9">
    <property type="interactions" value="1"/>
</dbReference>
<dbReference type="STRING" id="3702.P0C2F9"/>
<dbReference type="PaxDb" id="3702-AT4G39756.1"/>
<dbReference type="ProteomicsDB" id="228928"/>
<dbReference type="EnsemblPlants" id="AT4G39756.1">
    <property type="protein sequence ID" value="AT4G39756.1"/>
    <property type="gene ID" value="AT4G39756"/>
</dbReference>
<dbReference type="GeneID" id="830133"/>
<dbReference type="Gramene" id="AT4G39756.1">
    <property type="protein sequence ID" value="AT4G39756.1"/>
    <property type="gene ID" value="AT4G39756"/>
</dbReference>
<dbReference type="KEGG" id="ath:AT4G39756"/>
<dbReference type="Araport" id="AT4G39756"/>
<dbReference type="TAIR" id="AT4G39756"/>
<dbReference type="eggNOG" id="KOG1072">
    <property type="taxonomic scope" value="Eukaryota"/>
</dbReference>
<dbReference type="HOGENOM" id="CLU_032521_1_2_1"/>
<dbReference type="InParanoid" id="P0C2F9"/>
<dbReference type="PhylomeDB" id="P0C2F9"/>
<dbReference type="PRO" id="PR:P0C2F9"/>
<dbReference type="Proteomes" id="UP000006548">
    <property type="component" value="Chromosome 4"/>
</dbReference>
<dbReference type="ExpressionAtlas" id="P0C2F9">
    <property type="expression patterns" value="baseline and differential"/>
</dbReference>
<dbReference type="CDD" id="cd22152">
    <property type="entry name" value="F-box_AtAFR-like"/>
    <property type="match status" value="1"/>
</dbReference>
<dbReference type="Gene3D" id="2.120.10.80">
    <property type="entry name" value="Kelch-type beta propeller"/>
    <property type="match status" value="1"/>
</dbReference>
<dbReference type="InterPro" id="IPR036047">
    <property type="entry name" value="F-box-like_dom_sf"/>
</dbReference>
<dbReference type="InterPro" id="IPR050354">
    <property type="entry name" value="F-box/kelch-repeat_ARATH"/>
</dbReference>
<dbReference type="InterPro" id="IPR001810">
    <property type="entry name" value="F-box_dom"/>
</dbReference>
<dbReference type="InterPro" id="IPR015915">
    <property type="entry name" value="Kelch-typ_b-propeller"/>
</dbReference>
<dbReference type="PANTHER" id="PTHR24414:SF185">
    <property type="entry name" value="F-BOX DOMAIN-CONTAINING PROTEIN"/>
    <property type="match status" value="1"/>
</dbReference>
<dbReference type="PANTHER" id="PTHR24414">
    <property type="entry name" value="F-BOX/KELCH-REPEAT PROTEIN SKIP4"/>
    <property type="match status" value="1"/>
</dbReference>
<dbReference type="Pfam" id="PF00646">
    <property type="entry name" value="F-box"/>
    <property type="match status" value="1"/>
</dbReference>
<dbReference type="Pfam" id="PF25210">
    <property type="entry name" value="Kelch_FKB95"/>
    <property type="match status" value="1"/>
</dbReference>
<dbReference type="SMART" id="SM00256">
    <property type="entry name" value="FBOX"/>
    <property type="match status" value="1"/>
</dbReference>
<dbReference type="SUPFAM" id="SSF81383">
    <property type="entry name" value="F-box domain"/>
    <property type="match status" value="1"/>
</dbReference>
<dbReference type="SUPFAM" id="SSF117281">
    <property type="entry name" value="Kelch motif"/>
    <property type="match status" value="1"/>
</dbReference>
<dbReference type="PROSITE" id="PS50181">
    <property type="entry name" value="FBOX"/>
    <property type="match status" value="1"/>
</dbReference>
<sequence>MDSEAEPPQEKKKPNSCPSFLSLPEEILVNCLARIPKSYYPKLSLVCKSFCSLILSMELYVERLYLGTHEDVLHVCLQLPDRRLPSWFSLWTKPDQTLTNDIGKKKKSTRNTLLVPIPSSYSPRVPMFIGEIGSELYAISKHNTPSSVMWVRDKTSIYAWRKAPSMTVARANVFAYVINGKIYVMGGCAADESKYWAEVFDPKTQTWKPLTDPGAELRVSSIIGMAVSEGKIYVKNSYVKDYVYDPEEDKWDVVASSFMIERKCEIENVLYRFSRQSCSWYDTKHKEWRDIKGLATLNRRRRSSILEVAKYGDKVLILWEIFAKPFYQNKSIWCAVIALEKRKIDEIWGKVKWASIVLTVPRSYVFLRCEVKPV</sequence>
<comment type="sequence caution" evidence="2">
    <conflict type="erroneous gene model prediction">
        <sequence resource="EMBL-CDS" id="CAB77062"/>
    </conflict>
    <text>The predicted gene At4g39750 has been split into 3 genes: At4g39750, At4g39753 and At4g39756.</text>
</comment>
<comment type="sequence caution" evidence="2">
    <conflict type="erroneous gene model prediction">
        <sequence resource="EMBL-CDS" id="CAB80638"/>
    </conflict>
    <text>The predicted gene At4g39750 has been split into 3 genes: At4g39750, At4g39753 and At4g39756.</text>
</comment>
<keyword id="KW-0880">Kelch repeat</keyword>
<keyword id="KW-1185">Reference proteome</keyword>
<keyword id="KW-0677">Repeat</keyword>
<gene>
    <name type="ordered locus">At4g39756</name>
    <name type="ORF">T19P19.1</name>
</gene>
<evidence type="ECO:0000255" key="1">
    <source>
        <dbReference type="PROSITE-ProRule" id="PRU00080"/>
    </source>
</evidence>
<evidence type="ECO:0000305" key="2"/>
<organism>
    <name type="scientific">Arabidopsis thaliana</name>
    <name type="common">Mouse-ear cress</name>
    <dbReference type="NCBI Taxonomy" id="3702"/>
    <lineage>
        <taxon>Eukaryota</taxon>
        <taxon>Viridiplantae</taxon>
        <taxon>Streptophyta</taxon>
        <taxon>Embryophyta</taxon>
        <taxon>Tracheophyta</taxon>
        <taxon>Spermatophyta</taxon>
        <taxon>Magnoliopsida</taxon>
        <taxon>eudicotyledons</taxon>
        <taxon>Gunneridae</taxon>
        <taxon>Pentapetalae</taxon>
        <taxon>rosids</taxon>
        <taxon>malvids</taxon>
        <taxon>Brassicales</taxon>
        <taxon>Brassicaceae</taxon>
        <taxon>Camelineae</taxon>
        <taxon>Arabidopsis</taxon>
    </lineage>
</organism>
<name>FK105_ARATH</name>
<accession>P0C2F9</accession>
<accession>Q9LDK6</accession>
<feature type="chain" id="PRO_0000274964" description="Putative F-box/kelch-repeat protein At4g39756">
    <location>
        <begin position="1"/>
        <end position="374"/>
    </location>
</feature>
<feature type="domain" description="F-box" evidence="1">
    <location>
        <begin position="17"/>
        <end position="63"/>
    </location>
</feature>
<feature type="repeat" description="Kelch 1">
    <location>
        <begin position="135"/>
        <end position="180"/>
    </location>
</feature>
<feature type="repeat" description="Kelch 2">
    <location>
        <begin position="181"/>
        <end position="227"/>
    </location>
</feature>
<feature type="repeat" description="Kelch 3">
    <location>
        <begin position="231"/>
        <end position="278"/>
    </location>
</feature>
<feature type="repeat" description="Kelch 4">
    <location>
        <begin position="280"/>
        <end position="308"/>
    </location>
</feature>
<proteinExistence type="predicted"/>
<reference key="1">
    <citation type="journal article" date="1999" name="Nature">
        <title>Sequence and analysis of chromosome 4 of the plant Arabidopsis thaliana.</title>
        <authorList>
            <person name="Mayer K.F.X."/>
            <person name="Schueller C."/>
            <person name="Wambutt R."/>
            <person name="Murphy G."/>
            <person name="Volckaert G."/>
            <person name="Pohl T."/>
            <person name="Duesterhoeft A."/>
            <person name="Stiekema W."/>
            <person name="Entian K.-D."/>
            <person name="Terryn N."/>
            <person name="Harris B."/>
            <person name="Ansorge W."/>
            <person name="Brandt P."/>
            <person name="Grivell L.A."/>
            <person name="Rieger M."/>
            <person name="Weichselgartner M."/>
            <person name="de Simone V."/>
            <person name="Obermaier B."/>
            <person name="Mache R."/>
            <person name="Mueller M."/>
            <person name="Kreis M."/>
            <person name="Delseny M."/>
            <person name="Puigdomenech P."/>
            <person name="Watson M."/>
            <person name="Schmidtheini T."/>
            <person name="Reichert B."/>
            <person name="Portetelle D."/>
            <person name="Perez-Alonso M."/>
            <person name="Boutry M."/>
            <person name="Bancroft I."/>
            <person name="Vos P."/>
            <person name="Hoheisel J."/>
            <person name="Zimmermann W."/>
            <person name="Wedler H."/>
            <person name="Ridley P."/>
            <person name="Langham S.-A."/>
            <person name="McCullagh B."/>
            <person name="Bilham L."/>
            <person name="Robben J."/>
            <person name="van der Schueren J."/>
            <person name="Grymonprez B."/>
            <person name="Chuang Y.-J."/>
            <person name="Vandenbussche F."/>
            <person name="Braeken M."/>
            <person name="Weltjens I."/>
            <person name="Voet M."/>
            <person name="Bastiaens I."/>
            <person name="Aert R."/>
            <person name="Defoor E."/>
            <person name="Weitzenegger T."/>
            <person name="Bothe G."/>
            <person name="Ramsperger U."/>
            <person name="Hilbert H."/>
            <person name="Braun M."/>
            <person name="Holzer E."/>
            <person name="Brandt A."/>
            <person name="Peters S."/>
            <person name="van Staveren M."/>
            <person name="Dirkse W."/>
            <person name="Mooijman P."/>
            <person name="Klein Lankhorst R."/>
            <person name="Rose M."/>
            <person name="Hauf J."/>
            <person name="Koetter P."/>
            <person name="Berneiser S."/>
            <person name="Hempel S."/>
            <person name="Feldpausch M."/>
            <person name="Lamberth S."/>
            <person name="Van den Daele H."/>
            <person name="De Keyser A."/>
            <person name="Buysshaert C."/>
            <person name="Gielen J."/>
            <person name="Villarroel R."/>
            <person name="De Clercq R."/>
            <person name="van Montagu M."/>
            <person name="Rogers J."/>
            <person name="Cronin A."/>
            <person name="Quail M.A."/>
            <person name="Bray-Allen S."/>
            <person name="Clark L."/>
            <person name="Doggett J."/>
            <person name="Hall S."/>
            <person name="Kay M."/>
            <person name="Lennard N."/>
            <person name="McLay K."/>
            <person name="Mayes R."/>
            <person name="Pettett A."/>
            <person name="Rajandream M.A."/>
            <person name="Lyne M."/>
            <person name="Benes V."/>
            <person name="Rechmann S."/>
            <person name="Borkova D."/>
            <person name="Bloecker H."/>
            <person name="Scharfe M."/>
            <person name="Grimm M."/>
            <person name="Loehnert T.-H."/>
            <person name="Dose S."/>
            <person name="de Haan M."/>
            <person name="Maarse A.C."/>
            <person name="Schaefer M."/>
            <person name="Mueller-Auer S."/>
            <person name="Gabel C."/>
            <person name="Fuchs M."/>
            <person name="Fartmann B."/>
            <person name="Granderath K."/>
            <person name="Dauner D."/>
            <person name="Herzl A."/>
            <person name="Neumann S."/>
            <person name="Argiriou A."/>
            <person name="Vitale D."/>
            <person name="Liguori R."/>
            <person name="Piravandi E."/>
            <person name="Massenet O."/>
            <person name="Quigley F."/>
            <person name="Clabauld G."/>
            <person name="Muendlein A."/>
            <person name="Felber R."/>
            <person name="Schnabl S."/>
            <person name="Hiller R."/>
            <person name="Schmidt W."/>
            <person name="Lecharny A."/>
            <person name="Aubourg S."/>
            <person name="Chefdor F."/>
            <person name="Cooke R."/>
            <person name="Berger C."/>
            <person name="Monfort A."/>
            <person name="Casacuberta E."/>
            <person name="Gibbons T."/>
            <person name="Weber N."/>
            <person name="Vandenbol M."/>
            <person name="Bargues M."/>
            <person name="Terol J."/>
            <person name="Torres A."/>
            <person name="Perez-Perez A."/>
            <person name="Purnelle B."/>
            <person name="Bent E."/>
            <person name="Johnson S."/>
            <person name="Tacon D."/>
            <person name="Jesse T."/>
            <person name="Heijnen L."/>
            <person name="Schwarz S."/>
            <person name="Scholler P."/>
            <person name="Heber S."/>
            <person name="Francs P."/>
            <person name="Bielke C."/>
            <person name="Frishman D."/>
            <person name="Haase D."/>
            <person name="Lemcke K."/>
            <person name="Mewes H.-W."/>
            <person name="Stocker S."/>
            <person name="Zaccaria P."/>
            <person name="Bevan M."/>
            <person name="Wilson R.K."/>
            <person name="de la Bastide M."/>
            <person name="Habermann K."/>
            <person name="Parnell L."/>
            <person name="Dedhia N."/>
            <person name="Gnoj L."/>
            <person name="Schutz K."/>
            <person name="Huang E."/>
            <person name="Spiegel L."/>
            <person name="Sekhon M."/>
            <person name="Murray J."/>
            <person name="Sheet P."/>
            <person name="Cordes M."/>
            <person name="Abu-Threideh J."/>
            <person name="Stoneking T."/>
            <person name="Kalicki J."/>
            <person name="Graves T."/>
            <person name="Harmon G."/>
            <person name="Edwards J."/>
            <person name="Latreille P."/>
            <person name="Courtney L."/>
            <person name="Cloud J."/>
            <person name="Abbott A."/>
            <person name="Scott K."/>
            <person name="Johnson D."/>
            <person name="Minx P."/>
            <person name="Bentley D."/>
            <person name="Fulton B."/>
            <person name="Miller N."/>
            <person name="Greco T."/>
            <person name="Kemp K."/>
            <person name="Kramer J."/>
            <person name="Fulton L."/>
            <person name="Mardis E."/>
            <person name="Dante M."/>
            <person name="Pepin K."/>
            <person name="Hillier L.W."/>
            <person name="Nelson J."/>
            <person name="Spieth J."/>
            <person name="Ryan E."/>
            <person name="Andrews S."/>
            <person name="Geisel C."/>
            <person name="Layman D."/>
            <person name="Du H."/>
            <person name="Ali J."/>
            <person name="Berghoff A."/>
            <person name="Jones K."/>
            <person name="Drone K."/>
            <person name="Cotton M."/>
            <person name="Joshu C."/>
            <person name="Antonoiu B."/>
            <person name="Zidanic M."/>
            <person name="Strong C."/>
            <person name="Sun H."/>
            <person name="Lamar B."/>
            <person name="Yordan C."/>
            <person name="Ma P."/>
            <person name="Zhong J."/>
            <person name="Preston R."/>
            <person name="Vil D."/>
            <person name="Shekher M."/>
            <person name="Matero A."/>
            <person name="Shah R."/>
            <person name="Swaby I.K."/>
            <person name="O'Shaughnessy A."/>
            <person name="Rodriguez M."/>
            <person name="Hoffman J."/>
            <person name="Till S."/>
            <person name="Granat S."/>
            <person name="Shohdy N."/>
            <person name="Hasegawa A."/>
            <person name="Hameed A."/>
            <person name="Lodhi M."/>
            <person name="Johnson A."/>
            <person name="Chen E."/>
            <person name="Marra M.A."/>
            <person name="Martienssen R."/>
            <person name="McCombie W.R."/>
        </authorList>
    </citation>
    <scope>NUCLEOTIDE SEQUENCE [LARGE SCALE GENOMIC DNA]</scope>
    <source>
        <strain>cv. Columbia</strain>
    </source>
</reference>
<reference key="2">
    <citation type="journal article" date="2017" name="Plant J.">
        <title>Araport11: a complete reannotation of the Arabidopsis thaliana reference genome.</title>
        <authorList>
            <person name="Cheng C.Y."/>
            <person name="Krishnakumar V."/>
            <person name="Chan A.P."/>
            <person name="Thibaud-Nissen F."/>
            <person name="Schobel S."/>
            <person name="Town C.D."/>
        </authorList>
    </citation>
    <scope>GENOME REANNOTATION</scope>
    <source>
        <strain>cv. Columbia</strain>
    </source>
</reference>
<protein>
    <recommendedName>
        <fullName>Putative F-box/kelch-repeat protein At4g39756</fullName>
    </recommendedName>
</protein>